<gene>
    <name type="primary">yukB</name>
    <name type="synonym">yukA</name>
    <name type="synonym">yukBA</name>
    <name type="ordered locus">BSU31875</name>
    <name type="ORF">BSU31880</name>
</gene>
<keyword id="KW-0067">ATP-binding</keyword>
<keyword id="KW-1003">Cell membrane</keyword>
<keyword id="KW-0472">Membrane</keyword>
<keyword id="KW-0547">Nucleotide-binding</keyword>
<keyword id="KW-1185">Reference proteome</keyword>
<keyword id="KW-0677">Repeat</keyword>
<keyword id="KW-0812">Transmembrane</keyword>
<keyword id="KW-1133">Transmembrane helix</keyword>
<dbReference type="EMBL" id="AL009126">
    <property type="protein sequence ID" value="CAB15176.2"/>
    <property type="molecule type" value="Genomic_DNA"/>
</dbReference>
<dbReference type="EMBL" id="Z82015">
    <property type="protein sequence ID" value="CAB04781.1"/>
    <property type="status" value="ALT_FRAME"/>
    <property type="molecule type" value="Genomic_DNA"/>
</dbReference>
<dbReference type="EMBL" id="Z82015">
    <property type="protein sequence ID" value="CAB04782.1"/>
    <property type="status" value="ALT_SEQ"/>
    <property type="molecule type" value="Genomic_DNA"/>
</dbReference>
<dbReference type="PIR" id="D70013">
    <property type="entry name" value="D70013"/>
</dbReference>
<dbReference type="SMR" id="C0SPA7"/>
<dbReference type="FunCoup" id="C0SPA7">
    <property type="interactions" value="23"/>
</dbReference>
<dbReference type="STRING" id="224308.BSU31875"/>
<dbReference type="PaxDb" id="224308-BSU31875"/>
<dbReference type="EnsemblBacteria" id="CAB15176">
    <property type="protein sequence ID" value="CAB15176"/>
    <property type="gene ID" value="BSU_31875"/>
</dbReference>
<dbReference type="GeneID" id="936565"/>
<dbReference type="KEGG" id="bsu:BSU31875"/>
<dbReference type="PATRIC" id="fig|224308.179.peg.3453"/>
<dbReference type="eggNOG" id="COG0433">
    <property type="taxonomic scope" value="Bacteria"/>
</dbReference>
<dbReference type="eggNOG" id="COG1674">
    <property type="taxonomic scope" value="Bacteria"/>
</dbReference>
<dbReference type="InParanoid" id="C0SPA7"/>
<dbReference type="OrthoDB" id="9807790at2"/>
<dbReference type="PhylomeDB" id="C0SPA7"/>
<dbReference type="BioCyc" id="BSUB:BSU31875-MONOMER"/>
<dbReference type="Proteomes" id="UP000001570">
    <property type="component" value="Chromosome"/>
</dbReference>
<dbReference type="GO" id="GO:0005886">
    <property type="term" value="C:plasma membrane"/>
    <property type="evidence" value="ECO:0007669"/>
    <property type="project" value="UniProtKB-SubCell"/>
</dbReference>
<dbReference type="GO" id="GO:0005524">
    <property type="term" value="F:ATP binding"/>
    <property type="evidence" value="ECO:0007669"/>
    <property type="project" value="UniProtKB-KW"/>
</dbReference>
<dbReference type="GO" id="GO:0003677">
    <property type="term" value="F:DNA binding"/>
    <property type="evidence" value="ECO:0007669"/>
    <property type="project" value="InterPro"/>
</dbReference>
<dbReference type="CDD" id="cd00060">
    <property type="entry name" value="FHA"/>
    <property type="match status" value="1"/>
</dbReference>
<dbReference type="Gene3D" id="3.40.50.300">
    <property type="entry name" value="P-loop containing nucleotide triphosphate hydrolases"/>
    <property type="match status" value="3"/>
</dbReference>
<dbReference type="InterPro" id="IPR023839">
    <property type="entry name" value="Firmicutes_EssC_C"/>
</dbReference>
<dbReference type="InterPro" id="IPR022206">
    <property type="entry name" value="Firmicutes_EssC_N"/>
</dbReference>
<dbReference type="InterPro" id="IPR050206">
    <property type="entry name" value="FtsK/SpoIIIE/SftA"/>
</dbReference>
<dbReference type="InterPro" id="IPR002543">
    <property type="entry name" value="FtsK_dom"/>
</dbReference>
<dbReference type="InterPro" id="IPR027417">
    <property type="entry name" value="P-loop_NTPase"/>
</dbReference>
<dbReference type="NCBIfam" id="TIGR03928">
    <property type="entry name" value="T7_EssCb_Firm"/>
    <property type="match status" value="1"/>
</dbReference>
<dbReference type="PANTHER" id="PTHR22683">
    <property type="entry name" value="SPORULATION PROTEIN RELATED"/>
    <property type="match status" value="1"/>
</dbReference>
<dbReference type="PANTHER" id="PTHR22683:SF1">
    <property type="entry name" value="TYPE VII SECRETION SYSTEM PROTEIN ESSC"/>
    <property type="match status" value="1"/>
</dbReference>
<dbReference type="Pfam" id="PF01580">
    <property type="entry name" value="FtsK_SpoIIIE"/>
    <property type="match status" value="3"/>
</dbReference>
<dbReference type="Pfam" id="PF12538">
    <property type="entry name" value="FtsK_SpoIIIE_N"/>
    <property type="match status" value="1"/>
</dbReference>
<dbReference type="SUPFAM" id="SSF52540">
    <property type="entry name" value="P-loop containing nucleoside triphosphate hydrolases"/>
    <property type="match status" value="3"/>
</dbReference>
<dbReference type="PROSITE" id="PS50901">
    <property type="entry name" value="FTSK"/>
    <property type="match status" value="2"/>
</dbReference>
<sequence>MSLLWVFYQNNVQKLNLSNLPSSHPVTIGPDVKDSVTISTIPFNSGVISLKRKESGGQYEVFLGNDCLGTIETDISFTLQTDQQDIRLILTGSEPEKSVYFTGNRDEIVCSSEKTNADIYLNPQDFAFAEQSTFSLLRAGGSWSVRPESGTIFLNGEKINANTPLKPGDEIFWNFTQMRVTEQDLLEIVHYAQFETALTETVKPSTEMQKKYPQYRRTPRMVYDLPDDRVSFSFPSQESDQTNRGLWLVILPPLVMLIVMGVVAIIQPRGIFILVSLAMFMMTLITSTVQYFRDKNQRKKREEKRERVYKLYLDNKRKELQALAEKQKQVLEFHFPSFEQMKYLTSEISDRIWEKSLESKDYLQLRLGTGTVPSSYEINMSGGDLANRDIDDLMEKSQHMQRVYKDIRNAPVTVDLAEGPMGLVGKSQIVKNEIHQLIGQLSFFNSYHDLRFVFIFHEEEYKDWEWMKWLPQFQMPHIYAKGFIYNEQTRDQLLSSLYELIRERDLEDDKEKLQFKPHFVFVITNQQLISEHVILEYLEGQHEHLGISTIVAAETKESLSENITTLVRYINEHEGDILIQKKKAVRIPFRLDHHQREDNERFSRTLRTLNHQVGITNSIPETVSFLELFHAKEVKEIGIQQRWLTSESSKSLSVPIGYKGKDDIVYLNLHEKAHGPHGLLAGTTGSGKSEFLQTYILSLAVHFHPHEAAFLLIDYKGGGMAQPFRNIPHLLGTITNIEGSKNFSMRALASIKSELKKRQRLFDQYQVNHINDYTKLYKQGKAEVAMPHLFLISDEFAELKSEEPDFIRELVSAARIGRSLGVHLILATQKPGGIIDDQIWSNSRFKVALKVQDATDSKEILKNSDAANITVTGRGYLQVGNNEVYELFQSAWSGAPYLEEVYGTEDEIAIVTDTGLIPLSEVDTEDNAKKDVQTEIEAVVDEIERIQDEMGIEKLPSPWLPPLAERIPRTLFPSNEKDHFHFAYVDEPDLQRQAPIAYKMMEDGNIGIFGSSGYGKSIAAATFLMSFADVYTPEELHVYIFDFGNGTLLPLAKLPHTADYFLMDQSRKIEKFMIRIKEEIDRRKRLFREKEISHIKMYNALSEEELPFIFITIDNFDIVKDEMHELESEFVQLSRDGQSLGIYFMLTATRVNAVRQSLLNNLKTKIVHYLMDQSEGYSIYGRPKFNLEPIPGRVIIQKEELYFAQMFLPVDADDDIGMFNELKSDVQKLQGRFASMEQPAPIPMLPESLSTRELSIRFKLERKPLSVPIGLHEETVSPVYFDLGKHKHCLILGQTQRGKTNVLKVMLEHLIDDETEMIGLFDSIDRGLSHYAKESDVSYLETKEDIEQWIETAEDIFKTREAMYVEAVRQGDAQNLRFSQVVLMIDGITRFQQTIDTRIQDRLANFMKSYAHLGFSFIPGGNHSEFSKGYDSLTTEMKQIRHAILLMKKSEQNVIPLPYQRQEPEIQPGFGYVVENGKEQKVQIPLCSAERESAR</sequence>
<accession>C0SPA7</accession>
<accession>P71069</accession>
<accession>Q795L5</accession>
<accession>Q798N1</accession>
<protein>
    <recommendedName>
        <fullName evidence="6">ESX secretion system protein YukB</fullName>
    </recommendedName>
</protein>
<feature type="chain" id="PRO_0000383633" description="ESX secretion system protein YukB">
    <location>
        <begin position="1"/>
        <end position="1495"/>
    </location>
</feature>
<feature type="transmembrane region" description="Helical" evidence="1">
    <location>
        <begin position="246"/>
        <end position="266"/>
    </location>
</feature>
<feature type="transmembrane region" description="Helical" evidence="1">
    <location>
        <begin position="270"/>
        <end position="290"/>
    </location>
</feature>
<feature type="domain" description="FtsK 1" evidence="2">
    <location>
        <begin position="661"/>
        <end position="858"/>
    </location>
</feature>
<feature type="domain" description="FtsK 2" evidence="2">
    <location>
        <begin position="993"/>
        <end position="1177"/>
    </location>
</feature>
<feature type="binding site" evidence="2">
    <location>
        <begin position="682"/>
        <end position="689"/>
    </location>
    <ligand>
        <name>ATP</name>
        <dbReference type="ChEBI" id="CHEBI:30616"/>
    </ligand>
</feature>
<feature type="binding site" evidence="2">
    <location>
        <begin position="1010"/>
        <end position="1017"/>
    </location>
    <ligand>
        <name>ATP</name>
        <dbReference type="ChEBI" id="CHEBI:30616"/>
    </ligand>
</feature>
<feature type="sequence conflict" description="In Ref. 3; CAB04782." evidence="6" ref="3">
    <original>I</original>
    <variation>V</variation>
    <location>
        <position position="119"/>
    </location>
</feature>
<feature type="sequence conflict" description="In Ref. 3; CAB04781." evidence="6" ref="3">
    <original>WL</original>
    <variation>CV</variation>
    <location>
        <begin position="469"/>
        <end position="470"/>
    </location>
</feature>
<reference key="1">
    <citation type="journal article" date="1997" name="Nature">
        <title>The complete genome sequence of the Gram-positive bacterium Bacillus subtilis.</title>
        <authorList>
            <person name="Kunst F."/>
            <person name="Ogasawara N."/>
            <person name="Moszer I."/>
            <person name="Albertini A.M."/>
            <person name="Alloni G."/>
            <person name="Azevedo V."/>
            <person name="Bertero M.G."/>
            <person name="Bessieres P."/>
            <person name="Bolotin A."/>
            <person name="Borchert S."/>
            <person name="Borriss R."/>
            <person name="Boursier L."/>
            <person name="Brans A."/>
            <person name="Braun M."/>
            <person name="Brignell S.C."/>
            <person name="Bron S."/>
            <person name="Brouillet S."/>
            <person name="Bruschi C.V."/>
            <person name="Caldwell B."/>
            <person name="Capuano V."/>
            <person name="Carter N.M."/>
            <person name="Choi S.-K."/>
            <person name="Codani J.-J."/>
            <person name="Connerton I.F."/>
            <person name="Cummings N.J."/>
            <person name="Daniel R.A."/>
            <person name="Denizot F."/>
            <person name="Devine K.M."/>
            <person name="Duesterhoeft A."/>
            <person name="Ehrlich S.D."/>
            <person name="Emmerson P.T."/>
            <person name="Entian K.-D."/>
            <person name="Errington J."/>
            <person name="Fabret C."/>
            <person name="Ferrari E."/>
            <person name="Foulger D."/>
            <person name="Fritz C."/>
            <person name="Fujita M."/>
            <person name="Fujita Y."/>
            <person name="Fuma S."/>
            <person name="Galizzi A."/>
            <person name="Galleron N."/>
            <person name="Ghim S.-Y."/>
            <person name="Glaser P."/>
            <person name="Goffeau A."/>
            <person name="Golightly E.J."/>
            <person name="Grandi G."/>
            <person name="Guiseppi G."/>
            <person name="Guy B.J."/>
            <person name="Haga K."/>
            <person name="Haiech J."/>
            <person name="Harwood C.R."/>
            <person name="Henaut A."/>
            <person name="Hilbert H."/>
            <person name="Holsappel S."/>
            <person name="Hosono S."/>
            <person name="Hullo M.-F."/>
            <person name="Itaya M."/>
            <person name="Jones L.-M."/>
            <person name="Joris B."/>
            <person name="Karamata D."/>
            <person name="Kasahara Y."/>
            <person name="Klaerr-Blanchard M."/>
            <person name="Klein C."/>
            <person name="Kobayashi Y."/>
            <person name="Koetter P."/>
            <person name="Koningstein G."/>
            <person name="Krogh S."/>
            <person name="Kumano M."/>
            <person name="Kurita K."/>
            <person name="Lapidus A."/>
            <person name="Lardinois S."/>
            <person name="Lauber J."/>
            <person name="Lazarevic V."/>
            <person name="Lee S.-M."/>
            <person name="Levine A."/>
            <person name="Liu H."/>
            <person name="Masuda S."/>
            <person name="Mauel C."/>
            <person name="Medigue C."/>
            <person name="Medina N."/>
            <person name="Mellado R.P."/>
            <person name="Mizuno M."/>
            <person name="Moestl D."/>
            <person name="Nakai S."/>
            <person name="Noback M."/>
            <person name="Noone D."/>
            <person name="O'Reilly M."/>
            <person name="Ogawa K."/>
            <person name="Ogiwara A."/>
            <person name="Oudega B."/>
            <person name="Park S.-H."/>
            <person name="Parro V."/>
            <person name="Pohl T.M."/>
            <person name="Portetelle D."/>
            <person name="Porwollik S."/>
            <person name="Prescott A.M."/>
            <person name="Presecan E."/>
            <person name="Pujic P."/>
            <person name="Purnelle B."/>
            <person name="Rapoport G."/>
            <person name="Rey M."/>
            <person name="Reynolds S."/>
            <person name="Rieger M."/>
            <person name="Rivolta C."/>
            <person name="Rocha E."/>
            <person name="Roche B."/>
            <person name="Rose M."/>
            <person name="Sadaie Y."/>
            <person name="Sato T."/>
            <person name="Scanlan E."/>
            <person name="Schleich S."/>
            <person name="Schroeter R."/>
            <person name="Scoffone F."/>
            <person name="Sekiguchi J."/>
            <person name="Sekowska A."/>
            <person name="Seror S.J."/>
            <person name="Serror P."/>
            <person name="Shin B.-S."/>
            <person name="Soldo B."/>
            <person name="Sorokin A."/>
            <person name="Tacconi E."/>
            <person name="Takagi T."/>
            <person name="Takahashi H."/>
            <person name="Takemaru K."/>
            <person name="Takeuchi M."/>
            <person name="Tamakoshi A."/>
            <person name="Tanaka T."/>
            <person name="Terpstra P."/>
            <person name="Tognoni A."/>
            <person name="Tosato V."/>
            <person name="Uchiyama S."/>
            <person name="Vandenbol M."/>
            <person name="Vannier F."/>
            <person name="Vassarotti A."/>
            <person name="Viari A."/>
            <person name="Wambutt R."/>
            <person name="Wedler E."/>
            <person name="Wedler H."/>
            <person name="Weitzenegger T."/>
            <person name="Winters P."/>
            <person name="Wipat A."/>
            <person name="Yamamoto H."/>
            <person name="Yamane K."/>
            <person name="Yasumoto K."/>
            <person name="Yata K."/>
            <person name="Yoshida K."/>
            <person name="Yoshikawa H.-F."/>
            <person name="Zumstein E."/>
            <person name="Yoshikawa H."/>
            <person name="Danchin A."/>
        </authorList>
    </citation>
    <scope>NUCLEOTIDE SEQUENCE [LARGE SCALE GENOMIC DNA]</scope>
    <source>
        <strain>168</strain>
    </source>
</reference>
<reference key="2">
    <citation type="journal article" date="2009" name="Microbiology">
        <title>From a consortium sequence to a unified sequence: the Bacillus subtilis 168 reference genome a decade later.</title>
        <authorList>
            <person name="Barbe V."/>
            <person name="Cruveiller S."/>
            <person name="Kunst F."/>
            <person name="Lenoble P."/>
            <person name="Meurice G."/>
            <person name="Sekowska A."/>
            <person name="Vallenet D."/>
            <person name="Wang T."/>
            <person name="Moszer I."/>
            <person name="Medigue C."/>
            <person name="Danchin A."/>
        </authorList>
    </citation>
    <scope>SEQUENCE REVISION</scope>
</reference>
<reference key="3">
    <citation type="journal article" date="1997" name="Microbiology">
        <title>A 12kb nucleotide sequence containing the alanine dehydrogenase gene at 279 degree on the Bacillus subtilis chromosome.</title>
        <authorList>
            <person name="Oudega B."/>
            <person name="Vandenbol M."/>
            <person name="Koningstein G."/>
        </authorList>
    </citation>
    <scope>NUCLEOTIDE SEQUENCE [GENOMIC DNA] OF 1-896</scope>
    <source>
        <strain>168</strain>
    </source>
</reference>
<reference key="4">
    <citation type="journal article" date="2004" name="J. Bacteriol.">
        <title>Bacillus subtilis operon encoding a membrane receptor for bacteriophage SPP1.</title>
        <authorList>
            <person name="Sao-Jose C."/>
            <person name="Baptista C."/>
            <person name="Santos M.A."/>
        </authorList>
    </citation>
    <scope>IDENTIFICATION OF FRAMESHIFT</scope>
    <scope>DISRUPTION PHENOTYPE</scope>
    <source>
        <strain>168</strain>
    </source>
</reference>
<reference key="5">
    <citation type="journal article" date="2013" name="PLoS ONE">
        <title>High levels of DegU-P activate an Esat-6-like secretion system in Bacillus subtilis.</title>
        <authorList>
            <person name="Baptista C."/>
            <person name="Barreto H.C."/>
            <person name="Sao-Jose C."/>
        </authorList>
    </citation>
    <scope>FUNCTION</scope>
    <scope>DISRUPTION PHENOTYPE</scope>
    <source>
        <strain>168</strain>
        <strain>ATCC 6051</strain>
    </source>
</reference>
<reference key="6">
    <citation type="journal article" date="2014" name="PLoS ONE">
        <title>The ESX system in Bacillus subtilis mediates protein secretion.</title>
        <authorList>
            <person name="Huppert L.A."/>
            <person name="Ramsdell T.L."/>
            <person name="Chase M.R."/>
            <person name="Sarracino D.A."/>
            <person name="Fortune S.M."/>
            <person name="Burton B.M."/>
        </authorList>
    </citation>
    <scope>FUNCTION</scope>
    <scope>DISRUPTION PHENOTYPE</scope>
    <source>
        <strain>168 / PY79</strain>
    </source>
</reference>
<proteinExistence type="inferred from homology"/>
<name>YUKB_BACSU</name>
<comment type="function">
    <text evidence="4 5">Required for YukE secretion. Probable component or regulator of the ESX/ESAT-6-like secretion system (BsEss).</text>
</comment>
<comment type="subcellular location">
    <subcellularLocation>
        <location evidence="6">Cell membrane</location>
        <topology evidence="1">Multi-pass membrane protein</topology>
    </subcellularLocation>
</comment>
<comment type="disruption phenotype">
    <text evidence="3 4 5">Cells lacking this gene are blocked in YukE secretion (PubMed:23861817, PubMed:24798022). They display an increased bacteriophage SPP1 resistance phenotype (PubMed:15576783).</text>
</comment>
<comment type="similarity">
    <text evidence="6">Belongs to the EssC family.</text>
</comment>
<comment type="sequence caution" evidence="6">
    <conflict type="frameshift">
        <sequence resource="EMBL-CDS" id="CAB04781"/>
    </conflict>
</comment>
<comment type="sequence caution" evidence="6">
    <conflict type="erroneous initiation">
        <sequence resource="EMBL-CDS" id="CAB04782"/>
    </conflict>
    <text>Truncated N-terminus.</text>
</comment>
<comment type="sequence caution" evidence="6">
    <conflict type="frameshift">
        <sequence resource="EMBL-CDS" id="CAB04782"/>
    </conflict>
</comment>
<evidence type="ECO:0000255" key="1"/>
<evidence type="ECO:0000255" key="2">
    <source>
        <dbReference type="PROSITE-ProRule" id="PRU00289"/>
    </source>
</evidence>
<evidence type="ECO:0000269" key="3">
    <source>
    </source>
</evidence>
<evidence type="ECO:0000269" key="4">
    <source>
    </source>
</evidence>
<evidence type="ECO:0000269" key="5">
    <source>
    </source>
</evidence>
<evidence type="ECO:0000305" key="6"/>
<organism>
    <name type="scientific">Bacillus subtilis (strain 168)</name>
    <dbReference type="NCBI Taxonomy" id="224308"/>
    <lineage>
        <taxon>Bacteria</taxon>
        <taxon>Bacillati</taxon>
        <taxon>Bacillota</taxon>
        <taxon>Bacilli</taxon>
        <taxon>Bacillales</taxon>
        <taxon>Bacillaceae</taxon>
        <taxon>Bacillus</taxon>
    </lineage>
</organism>